<proteinExistence type="inferred from homology"/>
<sequence>MIDRKDTNRFKLVSKYSPSGDQPQAIETLVDNIEGGEKAQILKGATGTGKTYTMSQVIAQVNKPTLVIAHNKTLAGQLYGEFKEFFPDNAVEYFVSYYDYYQPEAYVPSSDTYIEKDSSVNDEIDKLRHSATSSLLERNDVIVVASVSCIYGLGSPKEYADSVVSLRPGQEISRDQLLNNLVDIQFERNDIDFQRGKFRVRGDVVEVFPASRDEHAFRIEFFGDEIDRIREIESLTGRVLGEVEHLAIFPATHFMTNDEHMEEAISKIQAEMENQVELFEKEGKLIEAQRIRQRTEYDIEMLREMGYTNGVENYSRHMDGRSEGEPPFTLLDFFPEDFLIMIDESHMTMGQIKGMYNGDRSRKEMLVNYGFRLPSALDNRPLRREEFESHVHQIVYVSATPGDYEMGQTDTVVEQIIRPTGLLDPEVEVRPSMGQMDDLLGEINLRTEKGERTFITTLTKRMAEDLTDYLKEMGVKVKYMHSDIKTLERTEIIRDLRLGVFDVLIGINLLREGIDVPEVSLVAILDADKEGFLRNERGLIQTIGRAARNSNGHVIMYADKITDSMQRAMDETARRRRLQMDYNEKHGIVPQTIKKEIRDLIAITKSNDSDKPEKVVDYSSLSKKERQAEIKALQKQMQEAAELLDFELAAQIRDVILKLKAID</sequence>
<gene>
    <name evidence="1" type="primary">uvrB</name>
    <name type="ordered locus">SAK_1495</name>
</gene>
<reference key="1">
    <citation type="journal article" date="2005" name="Proc. Natl. Acad. Sci. U.S.A.">
        <title>Genome analysis of multiple pathogenic isolates of Streptococcus agalactiae: implications for the microbial 'pan-genome'.</title>
        <authorList>
            <person name="Tettelin H."/>
            <person name="Masignani V."/>
            <person name="Cieslewicz M.J."/>
            <person name="Donati C."/>
            <person name="Medini D."/>
            <person name="Ward N.L."/>
            <person name="Angiuoli S.V."/>
            <person name="Crabtree J."/>
            <person name="Jones A.L."/>
            <person name="Durkin A.S."/>
            <person name="DeBoy R.T."/>
            <person name="Davidsen T.M."/>
            <person name="Mora M."/>
            <person name="Scarselli M."/>
            <person name="Margarit y Ros I."/>
            <person name="Peterson J.D."/>
            <person name="Hauser C.R."/>
            <person name="Sundaram J.P."/>
            <person name="Nelson W.C."/>
            <person name="Madupu R."/>
            <person name="Brinkac L.M."/>
            <person name="Dodson R.J."/>
            <person name="Rosovitz M.J."/>
            <person name="Sullivan S.A."/>
            <person name="Daugherty S.C."/>
            <person name="Haft D.H."/>
            <person name="Selengut J."/>
            <person name="Gwinn M.L."/>
            <person name="Zhou L."/>
            <person name="Zafar N."/>
            <person name="Khouri H."/>
            <person name="Radune D."/>
            <person name="Dimitrov G."/>
            <person name="Watkins K."/>
            <person name="O'Connor K.J."/>
            <person name="Smith S."/>
            <person name="Utterback T.R."/>
            <person name="White O."/>
            <person name="Rubens C.E."/>
            <person name="Grandi G."/>
            <person name="Madoff L.C."/>
            <person name="Kasper D.L."/>
            <person name="Telford J.L."/>
            <person name="Wessels M.R."/>
            <person name="Rappuoli R."/>
            <person name="Fraser C.M."/>
        </authorList>
    </citation>
    <scope>NUCLEOTIDE SEQUENCE [LARGE SCALE GENOMIC DNA]</scope>
    <source>
        <strain>ATCC 27591 / A909 / CDC SS700</strain>
    </source>
</reference>
<feature type="chain" id="PRO_0000227365" description="UvrABC system protein B">
    <location>
        <begin position="1"/>
        <end position="663"/>
    </location>
</feature>
<feature type="domain" description="Helicase ATP-binding" evidence="1">
    <location>
        <begin position="31"/>
        <end position="418"/>
    </location>
</feature>
<feature type="domain" description="Helicase C-terminal" evidence="1">
    <location>
        <begin position="435"/>
        <end position="601"/>
    </location>
</feature>
<feature type="domain" description="UVR" evidence="1">
    <location>
        <begin position="627"/>
        <end position="662"/>
    </location>
</feature>
<feature type="short sequence motif" description="Beta-hairpin">
    <location>
        <begin position="97"/>
        <end position="120"/>
    </location>
</feature>
<feature type="binding site" evidence="1">
    <location>
        <begin position="44"/>
        <end position="51"/>
    </location>
    <ligand>
        <name>ATP</name>
        <dbReference type="ChEBI" id="CHEBI:30616"/>
    </ligand>
</feature>
<dbReference type="EMBL" id="CP000114">
    <property type="protein sequence ID" value="ABA45387.1"/>
    <property type="molecule type" value="Genomic_DNA"/>
</dbReference>
<dbReference type="RefSeq" id="WP_000567075.1">
    <property type="nucleotide sequence ID" value="NC_007432.1"/>
</dbReference>
<dbReference type="SMR" id="Q3K051"/>
<dbReference type="KEGG" id="sak:SAK_1495"/>
<dbReference type="HOGENOM" id="CLU_009621_2_1_9"/>
<dbReference type="GO" id="GO:0005737">
    <property type="term" value="C:cytoplasm"/>
    <property type="evidence" value="ECO:0007669"/>
    <property type="project" value="UniProtKB-SubCell"/>
</dbReference>
<dbReference type="GO" id="GO:0009380">
    <property type="term" value="C:excinuclease repair complex"/>
    <property type="evidence" value="ECO:0007669"/>
    <property type="project" value="InterPro"/>
</dbReference>
<dbReference type="GO" id="GO:0005524">
    <property type="term" value="F:ATP binding"/>
    <property type="evidence" value="ECO:0007669"/>
    <property type="project" value="UniProtKB-UniRule"/>
</dbReference>
<dbReference type="GO" id="GO:0016887">
    <property type="term" value="F:ATP hydrolysis activity"/>
    <property type="evidence" value="ECO:0007669"/>
    <property type="project" value="InterPro"/>
</dbReference>
<dbReference type="GO" id="GO:0003677">
    <property type="term" value="F:DNA binding"/>
    <property type="evidence" value="ECO:0007669"/>
    <property type="project" value="UniProtKB-UniRule"/>
</dbReference>
<dbReference type="GO" id="GO:0009381">
    <property type="term" value="F:excinuclease ABC activity"/>
    <property type="evidence" value="ECO:0007669"/>
    <property type="project" value="UniProtKB-UniRule"/>
</dbReference>
<dbReference type="GO" id="GO:0006289">
    <property type="term" value="P:nucleotide-excision repair"/>
    <property type="evidence" value="ECO:0007669"/>
    <property type="project" value="UniProtKB-UniRule"/>
</dbReference>
<dbReference type="GO" id="GO:0009432">
    <property type="term" value="P:SOS response"/>
    <property type="evidence" value="ECO:0007669"/>
    <property type="project" value="UniProtKB-UniRule"/>
</dbReference>
<dbReference type="CDD" id="cd17916">
    <property type="entry name" value="DEXHc_UvrB"/>
    <property type="match status" value="1"/>
</dbReference>
<dbReference type="CDD" id="cd18790">
    <property type="entry name" value="SF2_C_UvrB"/>
    <property type="match status" value="1"/>
</dbReference>
<dbReference type="Gene3D" id="3.40.50.300">
    <property type="entry name" value="P-loop containing nucleotide triphosphate hydrolases"/>
    <property type="match status" value="3"/>
</dbReference>
<dbReference type="Gene3D" id="4.10.860.10">
    <property type="entry name" value="UVR domain"/>
    <property type="match status" value="1"/>
</dbReference>
<dbReference type="HAMAP" id="MF_00204">
    <property type="entry name" value="UvrB"/>
    <property type="match status" value="1"/>
</dbReference>
<dbReference type="InterPro" id="IPR006935">
    <property type="entry name" value="Helicase/UvrB_N"/>
</dbReference>
<dbReference type="InterPro" id="IPR014001">
    <property type="entry name" value="Helicase_ATP-bd"/>
</dbReference>
<dbReference type="InterPro" id="IPR001650">
    <property type="entry name" value="Helicase_C-like"/>
</dbReference>
<dbReference type="InterPro" id="IPR027417">
    <property type="entry name" value="P-loop_NTPase"/>
</dbReference>
<dbReference type="InterPro" id="IPR001943">
    <property type="entry name" value="UVR_dom"/>
</dbReference>
<dbReference type="InterPro" id="IPR036876">
    <property type="entry name" value="UVR_dom_sf"/>
</dbReference>
<dbReference type="InterPro" id="IPR004807">
    <property type="entry name" value="UvrB"/>
</dbReference>
<dbReference type="InterPro" id="IPR041471">
    <property type="entry name" value="UvrB_inter"/>
</dbReference>
<dbReference type="InterPro" id="IPR024759">
    <property type="entry name" value="UvrB_YAD/RRR_dom"/>
</dbReference>
<dbReference type="NCBIfam" id="NF003673">
    <property type="entry name" value="PRK05298.1"/>
    <property type="match status" value="1"/>
</dbReference>
<dbReference type="NCBIfam" id="TIGR00631">
    <property type="entry name" value="uvrb"/>
    <property type="match status" value="1"/>
</dbReference>
<dbReference type="PANTHER" id="PTHR24029">
    <property type="entry name" value="UVRABC SYSTEM PROTEIN B"/>
    <property type="match status" value="1"/>
</dbReference>
<dbReference type="PANTHER" id="PTHR24029:SF0">
    <property type="entry name" value="UVRABC SYSTEM PROTEIN B"/>
    <property type="match status" value="1"/>
</dbReference>
<dbReference type="Pfam" id="PF00271">
    <property type="entry name" value="Helicase_C"/>
    <property type="match status" value="1"/>
</dbReference>
<dbReference type="Pfam" id="PF04851">
    <property type="entry name" value="ResIII"/>
    <property type="match status" value="1"/>
</dbReference>
<dbReference type="Pfam" id="PF02151">
    <property type="entry name" value="UVR"/>
    <property type="match status" value="1"/>
</dbReference>
<dbReference type="Pfam" id="PF12344">
    <property type="entry name" value="UvrB"/>
    <property type="match status" value="1"/>
</dbReference>
<dbReference type="Pfam" id="PF17757">
    <property type="entry name" value="UvrB_inter"/>
    <property type="match status" value="1"/>
</dbReference>
<dbReference type="SMART" id="SM00487">
    <property type="entry name" value="DEXDc"/>
    <property type="match status" value="1"/>
</dbReference>
<dbReference type="SMART" id="SM00490">
    <property type="entry name" value="HELICc"/>
    <property type="match status" value="1"/>
</dbReference>
<dbReference type="SUPFAM" id="SSF46600">
    <property type="entry name" value="C-terminal UvrC-binding domain of UvrB"/>
    <property type="match status" value="1"/>
</dbReference>
<dbReference type="SUPFAM" id="SSF52540">
    <property type="entry name" value="P-loop containing nucleoside triphosphate hydrolases"/>
    <property type="match status" value="2"/>
</dbReference>
<dbReference type="PROSITE" id="PS51192">
    <property type="entry name" value="HELICASE_ATP_BIND_1"/>
    <property type="match status" value="1"/>
</dbReference>
<dbReference type="PROSITE" id="PS51194">
    <property type="entry name" value="HELICASE_CTER"/>
    <property type="match status" value="1"/>
</dbReference>
<dbReference type="PROSITE" id="PS50151">
    <property type="entry name" value="UVR"/>
    <property type="match status" value="1"/>
</dbReference>
<accession>Q3K051</accession>
<evidence type="ECO:0000255" key="1">
    <source>
        <dbReference type="HAMAP-Rule" id="MF_00204"/>
    </source>
</evidence>
<name>UVRB_STRA1</name>
<keyword id="KW-0067">ATP-binding</keyword>
<keyword id="KW-0963">Cytoplasm</keyword>
<keyword id="KW-0227">DNA damage</keyword>
<keyword id="KW-0228">DNA excision</keyword>
<keyword id="KW-0234">DNA repair</keyword>
<keyword id="KW-0267">Excision nuclease</keyword>
<keyword id="KW-0547">Nucleotide-binding</keyword>
<keyword id="KW-0742">SOS response</keyword>
<comment type="function">
    <text evidence="1">The UvrABC repair system catalyzes the recognition and processing of DNA lesions. A damage recognition complex composed of 2 UvrA and 2 UvrB subunits scans DNA for abnormalities. Upon binding of the UvrA(2)B(2) complex to a putative damaged site, the DNA wraps around one UvrB monomer. DNA wrap is dependent on ATP binding by UvrB and probably causes local melting of the DNA helix, facilitating insertion of UvrB beta-hairpin between the DNA strands. Then UvrB probes one DNA strand for the presence of a lesion. If a lesion is found the UvrA subunits dissociate and the UvrB-DNA preincision complex is formed. This complex is subsequently bound by UvrC and the second UvrB is released. If no lesion is found, the DNA wraps around the other UvrB subunit that will check the other stand for damage.</text>
</comment>
<comment type="subunit">
    <text evidence="1">Forms a heterotetramer with UvrA during the search for lesions. Interacts with UvrC in an incision complex.</text>
</comment>
<comment type="subcellular location">
    <subcellularLocation>
        <location evidence="1">Cytoplasm</location>
    </subcellularLocation>
</comment>
<comment type="domain">
    <text evidence="1">The beta-hairpin motif is involved in DNA binding.</text>
</comment>
<comment type="similarity">
    <text evidence="1">Belongs to the UvrB family.</text>
</comment>
<organism>
    <name type="scientific">Streptococcus agalactiae serotype Ia (strain ATCC 27591 / A909 / CDC SS700)</name>
    <dbReference type="NCBI Taxonomy" id="205921"/>
    <lineage>
        <taxon>Bacteria</taxon>
        <taxon>Bacillati</taxon>
        <taxon>Bacillota</taxon>
        <taxon>Bacilli</taxon>
        <taxon>Lactobacillales</taxon>
        <taxon>Streptococcaceae</taxon>
        <taxon>Streptococcus</taxon>
    </lineage>
</organism>
<protein>
    <recommendedName>
        <fullName evidence="1">UvrABC system protein B</fullName>
        <shortName evidence="1">Protein UvrB</shortName>
    </recommendedName>
    <alternativeName>
        <fullName evidence="1">Excinuclease ABC subunit B</fullName>
    </alternativeName>
</protein>